<dbReference type="EMBL" id="CP000681">
    <property type="protein sequence ID" value="ABP75866.1"/>
    <property type="molecule type" value="Genomic_DNA"/>
</dbReference>
<dbReference type="SMR" id="A4Y7D3"/>
<dbReference type="STRING" id="319224.Sputcn32_2145"/>
<dbReference type="KEGG" id="spc:Sputcn32_2145"/>
<dbReference type="eggNOG" id="COG0443">
    <property type="taxonomic scope" value="Bacteria"/>
</dbReference>
<dbReference type="HOGENOM" id="CLU_005965_2_1_6"/>
<dbReference type="GO" id="GO:0005524">
    <property type="term" value="F:ATP binding"/>
    <property type="evidence" value="ECO:0007669"/>
    <property type="project" value="UniProtKB-KW"/>
</dbReference>
<dbReference type="GO" id="GO:0016887">
    <property type="term" value="F:ATP hydrolysis activity"/>
    <property type="evidence" value="ECO:0007669"/>
    <property type="project" value="UniProtKB-UniRule"/>
</dbReference>
<dbReference type="GO" id="GO:0140662">
    <property type="term" value="F:ATP-dependent protein folding chaperone"/>
    <property type="evidence" value="ECO:0007669"/>
    <property type="project" value="InterPro"/>
</dbReference>
<dbReference type="GO" id="GO:0051082">
    <property type="term" value="F:unfolded protein binding"/>
    <property type="evidence" value="ECO:0007669"/>
    <property type="project" value="InterPro"/>
</dbReference>
<dbReference type="GO" id="GO:0016226">
    <property type="term" value="P:iron-sulfur cluster assembly"/>
    <property type="evidence" value="ECO:0007669"/>
    <property type="project" value="InterPro"/>
</dbReference>
<dbReference type="FunFam" id="3.30.420.40:FF:000046">
    <property type="entry name" value="Chaperone protein HscA"/>
    <property type="match status" value="1"/>
</dbReference>
<dbReference type="FunFam" id="2.60.34.10:FF:000005">
    <property type="entry name" value="Chaperone protein HscA homolog"/>
    <property type="match status" value="1"/>
</dbReference>
<dbReference type="Gene3D" id="1.20.1270.10">
    <property type="match status" value="1"/>
</dbReference>
<dbReference type="Gene3D" id="3.30.420.40">
    <property type="match status" value="2"/>
</dbReference>
<dbReference type="Gene3D" id="3.90.640.10">
    <property type="entry name" value="Actin, Chain A, domain 4"/>
    <property type="match status" value="1"/>
</dbReference>
<dbReference type="Gene3D" id="2.60.34.10">
    <property type="entry name" value="Substrate Binding Domain Of DNAk, Chain A, domain 1"/>
    <property type="match status" value="1"/>
</dbReference>
<dbReference type="HAMAP" id="MF_00679">
    <property type="entry name" value="HscA"/>
    <property type="match status" value="1"/>
</dbReference>
<dbReference type="InterPro" id="IPR043129">
    <property type="entry name" value="ATPase_NBD"/>
</dbReference>
<dbReference type="InterPro" id="IPR018181">
    <property type="entry name" value="Heat_shock_70_CS"/>
</dbReference>
<dbReference type="InterPro" id="IPR029048">
    <property type="entry name" value="HSP70_C_sf"/>
</dbReference>
<dbReference type="InterPro" id="IPR029047">
    <property type="entry name" value="HSP70_peptide-bd_sf"/>
</dbReference>
<dbReference type="InterPro" id="IPR013126">
    <property type="entry name" value="Hsp_70_fam"/>
</dbReference>
<dbReference type="InterPro" id="IPR010236">
    <property type="entry name" value="ISC_FeS_clus_asmbl_HscA"/>
</dbReference>
<dbReference type="NCBIfam" id="TIGR01991">
    <property type="entry name" value="HscA"/>
    <property type="match status" value="1"/>
</dbReference>
<dbReference type="NCBIfam" id="NF003520">
    <property type="entry name" value="PRK05183.1"/>
    <property type="match status" value="1"/>
</dbReference>
<dbReference type="PANTHER" id="PTHR19375">
    <property type="entry name" value="HEAT SHOCK PROTEIN 70KDA"/>
    <property type="match status" value="1"/>
</dbReference>
<dbReference type="Pfam" id="PF00012">
    <property type="entry name" value="HSP70"/>
    <property type="match status" value="1"/>
</dbReference>
<dbReference type="PRINTS" id="PR00301">
    <property type="entry name" value="HEATSHOCK70"/>
</dbReference>
<dbReference type="SUPFAM" id="SSF53067">
    <property type="entry name" value="Actin-like ATPase domain"/>
    <property type="match status" value="2"/>
</dbReference>
<dbReference type="SUPFAM" id="SSF100934">
    <property type="entry name" value="Heat shock protein 70kD (HSP70), C-terminal subdomain"/>
    <property type="match status" value="1"/>
</dbReference>
<dbReference type="SUPFAM" id="SSF100920">
    <property type="entry name" value="Heat shock protein 70kD (HSP70), peptide-binding domain"/>
    <property type="match status" value="1"/>
</dbReference>
<dbReference type="PROSITE" id="PS00297">
    <property type="entry name" value="HSP70_1"/>
    <property type="match status" value="1"/>
</dbReference>
<dbReference type="PROSITE" id="PS00329">
    <property type="entry name" value="HSP70_2"/>
    <property type="match status" value="1"/>
</dbReference>
<name>HSCA_SHEPC</name>
<organism>
    <name type="scientific">Shewanella putrefaciens (strain CN-32 / ATCC BAA-453)</name>
    <dbReference type="NCBI Taxonomy" id="319224"/>
    <lineage>
        <taxon>Bacteria</taxon>
        <taxon>Pseudomonadati</taxon>
        <taxon>Pseudomonadota</taxon>
        <taxon>Gammaproteobacteria</taxon>
        <taxon>Alteromonadales</taxon>
        <taxon>Shewanellaceae</taxon>
        <taxon>Shewanella</taxon>
    </lineage>
</organism>
<protein>
    <recommendedName>
        <fullName evidence="1">Chaperone protein HscA homolog</fullName>
    </recommendedName>
</protein>
<feature type="chain" id="PRO_1000044890" description="Chaperone protein HscA homolog">
    <location>
        <begin position="1"/>
        <end position="620"/>
    </location>
</feature>
<proteinExistence type="inferred from homology"/>
<keyword id="KW-0067">ATP-binding</keyword>
<keyword id="KW-0143">Chaperone</keyword>
<keyword id="KW-0547">Nucleotide-binding</keyword>
<accession>A4Y7D3</accession>
<gene>
    <name evidence="1" type="primary">hscA</name>
    <name type="ordered locus">Sputcn32_2145</name>
</gene>
<reference key="1">
    <citation type="submission" date="2007-04" db="EMBL/GenBank/DDBJ databases">
        <title>Complete sequence of Shewanella putrefaciens CN-32.</title>
        <authorList>
            <consortium name="US DOE Joint Genome Institute"/>
            <person name="Copeland A."/>
            <person name="Lucas S."/>
            <person name="Lapidus A."/>
            <person name="Barry K."/>
            <person name="Detter J.C."/>
            <person name="Glavina del Rio T."/>
            <person name="Hammon N."/>
            <person name="Israni S."/>
            <person name="Dalin E."/>
            <person name="Tice H."/>
            <person name="Pitluck S."/>
            <person name="Chain P."/>
            <person name="Malfatti S."/>
            <person name="Shin M."/>
            <person name="Vergez L."/>
            <person name="Schmutz J."/>
            <person name="Larimer F."/>
            <person name="Land M."/>
            <person name="Hauser L."/>
            <person name="Kyrpides N."/>
            <person name="Mikhailova N."/>
            <person name="Romine M.F."/>
            <person name="Fredrickson J."/>
            <person name="Tiedje J."/>
            <person name="Richardson P."/>
        </authorList>
    </citation>
    <scope>NUCLEOTIDE SEQUENCE [LARGE SCALE GENOMIC DNA]</scope>
    <source>
        <strain>CN-32 / ATCC BAA-453</strain>
    </source>
</reference>
<sequence length="620" mass="66629">MALLQIAEPGQSAAPHQHRLAVGIDLGTTNSLVAAVRSGETATLPDEDGQHSLPSIVRYTQDTVEVGALAALSSAQDPKNTIVSVKRFMGRSLTDIQTGEQSFPYEFAESENGLPLFVTPQGLVNPVQVSAEILRPLIARAEKTLGGELQGVVITVPAYFDDAQRQGTKDAAALLGVKVLRLLNEPTAAAIAYGLDSKQEGVIAIFDLGGGTFDISVLRLNRGVFEVLATGGDSALGGDDFDHLLQEHMQQVWLLGDIDVQLRRQLLIEARRVKEALTDANETEARIILADGSELKQVVTKRDFDSLISPLVKKTIASCRRTLRDAGVTAEEVLETVMVGGSTRVPLVREQVEAFFGKPPLTSIDPDRVVAIGAAIQADILVGNKPESDLLLLDVIPLSLGIETMGGLVEKVVSRNTTIPVARAQEFTTFKDGQTAMAFHVVQGERELVADCRSLARFTLKGIPPLAAGAAHIRVTFQVDADGLLSVTAMEKSTGVQSSIQVKPSFGLSDTEIATMLKDSMKYAKDDISRRMLAEQQVEAARVLESLHAALAKDGDLLNDDERGQIDATMANVAQLATGDDAEAIKQAIERLDEQTQDFAARRMDNSIRVAFKGQSIDNI</sequence>
<comment type="function">
    <text evidence="1">Chaperone involved in the maturation of iron-sulfur cluster-containing proteins. Has a low intrinsic ATPase activity which is markedly stimulated by HscB.</text>
</comment>
<comment type="similarity">
    <text evidence="1">Belongs to the heat shock protein 70 family.</text>
</comment>
<evidence type="ECO:0000255" key="1">
    <source>
        <dbReference type="HAMAP-Rule" id="MF_00679"/>
    </source>
</evidence>